<comment type="function">
    <text>Uptake of inorganic phosphate, phosphorylated compounds, and some other negatively charged solutes.</text>
</comment>
<comment type="subunit">
    <text evidence="2">Homotrimer (PubMed:2464593). Forms mixed heterotrimers with OmpC and with OmpF; other mixed heterotrimers are also probable (PubMed:2464593).</text>
</comment>
<comment type="subcellular location">
    <subcellularLocation>
        <location evidence="2">Cell outer membrane</location>
        <topology>Multi-pass membrane protein</topology>
    </subcellularLocation>
</comment>
<comment type="induction">
    <text evidence="2">By phosphate starvation.</text>
</comment>
<comment type="similarity">
    <text evidence="3">Belongs to the Gram-negative porin family.</text>
</comment>
<gene>
    <name type="primary">phoE</name>
    <name type="synonym">ompE</name>
    <name type="ordered locus">b0241</name>
    <name type="ordered locus">JW0231</name>
</gene>
<name>PHOE_ECOLI</name>
<protein>
    <recommendedName>
        <fullName>Outer membrane porin PhoE</fullName>
    </recommendedName>
    <alternativeName>
        <fullName>Outer membrane pore protein E</fullName>
    </alternativeName>
</protein>
<sequence>MKKSTLALVVMGIVASASVQAAEIYNKDGNKLDVYGKVKAMHYMSDNASKDGDQSYIRFGFKGETQINDQLTGYGRWEAEFAGNKAESDTAQQKTRLAFAGLKYKDLGSFDYGRNLGALYDVEAWTDMFPEFGGDSSAQTDNFMTKRASGLATYRNTDFFGVIDGLNLTLQYQGKNENRDVKKQNGDGFGTSLTYDFGGSDFAISGAYTNSDRTNEQNLQSRGTGKRAEAWATGLKYDANNIYLATFYSETRKMTPITGGFANKTQNFEAVAQYQFDFGLRPSLGYVLSKGKDIEGIGDEDLVNYIDVGATYYFNKNMSAFVDYKINQLDSDNKLNINNDDIVAVGMTYQF</sequence>
<proteinExistence type="evidence at protein level"/>
<feature type="signal peptide">
    <location>
        <begin position="1"/>
        <end position="21"/>
    </location>
</feature>
<feature type="chain" id="PRO_0000025242" description="Outer membrane porin PhoE">
    <location>
        <begin position="22"/>
        <end position="351"/>
    </location>
</feature>
<feature type="mutagenesis site" description="Less resistant to trypsin." evidence="1">
    <original>F</original>
    <variation>Y</variation>
    <variation>N</variation>
    <variation>S</variation>
    <variation>V</variation>
    <location>
        <position position="351"/>
    </location>
</feature>
<feature type="strand" evidence="4">
    <location>
        <begin position="28"/>
        <end position="49"/>
    </location>
</feature>
<feature type="strand" evidence="4">
    <location>
        <begin position="56"/>
        <end position="65"/>
    </location>
</feature>
<feature type="strand" evidence="4">
    <location>
        <begin position="68"/>
        <end position="85"/>
    </location>
</feature>
<feature type="strand" evidence="4">
    <location>
        <begin position="93"/>
        <end position="104"/>
    </location>
</feature>
<feature type="turn" evidence="4">
    <location>
        <begin position="105"/>
        <end position="107"/>
    </location>
</feature>
<feature type="strand" evidence="4">
    <location>
        <begin position="108"/>
        <end position="116"/>
    </location>
</feature>
<feature type="helix" evidence="4">
    <location>
        <begin position="120"/>
        <end position="123"/>
    </location>
</feature>
<feature type="turn" evidence="4">
    <location>
        <begin position="124"/>
        <end position="126"/>
    </location>
</feature>
<feature type="strand" evidence="4">
    <location>
        <begin position="129"/>
        <end position="131"/>
    </location>
</feature>
<feature type="turn" evidence="4">
    <location>
        <begin position="143"/>
        <end position="145"/>
    </location>
</feature>
<feature type="strand" evidence="4">
    <location>
        <begin position="146"/>
        <end position="158"/>
    </location>
</feature>
<feature type="turn" evidence="4">
    <location>
        <begin position="159"/>
        <end position="162"/>
    </location>
</feature>
<feature type="strand" evidence="4">
    <location>
        <begin position="166"/>
        <end position="173"/>
    </location>
</feature>
<feature type="strand" evidence="4">
    <location>
        <begin position="187"/>
        <end position="197"/>
    </location>
</feature>
<feature type="turn" evidence="4">
    <location>
        <begin position="198"/>
        <end position="201"/>
    </location>
</feature>
<feature type="strand" evidence="4">
    <location>
        <begin position="202"/>
        <end position="212"/>
    </location>
</feature>
<feature type="helix" evidence="4">
    <location>
        <begin position="215"/>
        <end position="217"/>
    </location>
</feature>
<feature type="strand" evidence="4">
    <location>
        <begin position="220"/>
        <end position="223"/>
    </location>
</feature>
<feature type="strand" evidence="4">
    <location>
        <begin position="225"/>
        <end position="239"/>
    </location>
</feature>
<feature type="strand" evidence="4">
    <location>
        <begin position="242"/>
        <end position="253"/>
    </location>
</feature>
<feature type="strand" evidence="4">
    <location>
        <begin position="258"/>
        <end position="261"/>
    </location>
</feature>
<feature type="strand" evidence="4">
    <location>
        <begin position="263"/>
        <end position="274"/>
    </location>
</feature>
<feature type="strand" evidence="4">
    <location>
        <begin position="277"/>
        <end position="294"/>
    </location>
</feature>
<feature type="turn" evidence="4">
    <location>
        <begin position="295"/>
        <end position="297"/>
    </location>
</feature>
<feature type="strand" evidence="4">
    <location>
        <begin position="301"/>
        <end position="327"/>
    </location>
</feature>
<feature type="strand" evidence="4">
    <location>
        <begin position="342"/>
        <end position="351"/>
    </location>
</feature>
<keyword id="KW-0002">3D-structure</keyword>
<keyword id="KW-0998">Cell outer membrane</keyword>
<keyword id="KW-0406">Ion transport</keyword>
<keyword id="KW-0472">Membrane</keyword>
<keyword id="KW-0626">Porin</keyword>
<keyword id="KW-1185">Reference proteome</keyword>
<keyword id="KW-0732">Signal</keyword>
<keyword id="KW-0346">Stress response</keyword>
<keyword id="KW-0812">Transmembrane</keyword>
<keyword id="KW-1134">Transmembrane beta strand</keyword>
<keyword id="KW-0813">Transport</keyword>
<organism>
    <name type="scientific">Escherichia coli (strain K12)</name>
    <dbReference type="NCBI Taxonomy" id="83333"/>
    <lineage>
        <taxon>Bacteria</taxon>
        <taxon>Pseudomonadati</taxon>
        <taxon>Pseudomonadota</taxon>
        <taxon>Gammaproteobacteria</taxon>
        <taxon>Enterobacterales</taxon>
        <taxon>Enterobacteriaceae</taxon>
        <taxon>Escherichia</taxon>
    </lineage>
</organism>
<reference key="1">
    <citation type="journal article" date="1983" name="J. Mol. Biol.">
        <title>Complete nucleotide sequence of phoE, the structural gene for the phosphate limitation inducible outer membrane pore protein of Escherichia coli K12.</title>
        <authorList>
            <person name="Overbeeke N."/>
            <person name="Bergmans H."/>
            <person name="van Mansfeld F."/>
            <person name="Lugtenberg B."/>
        </authorList>
    </citation>
    <scope>NUCLEOTIDE SEQUENCE [GENOMIC DNA]</scope>
    <source>
        <strain>K12</strain>
    </source>
</reference>
<reference key="2">
    <citation type="submission" date="1996-02" db="EMBL/GenBank/DDBJ databases">
        <title>Systematic sequencing of the Escherichia coli genome: analysis of the 4.0 - 6.0 min (189,987 - 281,416bp) region.</title>
        <authorList>
            <person name="Takemoto K."/>
            <person name="Mori H."/>
            <person name="Murayama N."/>
            <person name="Kataoka K."/>
            <person name="Yano M."/>
            <person name="Itoh T."/>
            <person name="Yamamoto Y."/>
            <person name="Inokuchi H."/>
            <person name="Miki T."/>
            <person name="Hatada E."/>
            <person name="Fukuda R."/>
            <person name="Ichihara S."/>
            <person name="Mizuno T."/>
            <person name="Makino K."/>
            <person name="Nakata A."/>
            <person name="Yura T."/>
            <person name="Sampei G."/>
            <person name="Mizobuchi K."/>
        </authorList>
    </citation>
    <scope>NUCLEOTIDE SEQUENCE [LARGE SCALE GENOMIC DNA]</scope>
    <source>
        <strain>K12 / W3110 / ATCC 27325 / DSM 5911</strain>
    </source>
</reference>
<reference key="3">
    <citation type="submission" date="1997-01" db="EMBL/GenBank/DDBJ databases">
        <title>Sequence of minutes 4-25 of Escherichia coli.</title>
        <authorList>
            <person name="Chung E."/>
            <person name="Allen E."/>
            <person name="Araujo R."/>
            <person name="Aparicio A.M."/>
            <person name="Davis K."/>
            <person name="Duncan M."/>
            <person name="Federspiel N."/>
            <person name="Hyman R."/>
            <person name="Kalman S."/>
            <person name="Komp C."/>
            <person name="Kurdi O."/>
            <person name="Lew H."/>
            <person name="Lin D."/>
            <person name="Namath A."/>
            <person name="Oefner P."/>
            <person name="Roberts D."/>
            <person name="Schramm S."/>
            <person name="Davis R.W."/>
        </authorList>
    </citation>
    <scope>NUCLEOTIDE SEQUENCE [LARGE SCALE GENOMIC DNA]</scope>
    <source>
        <strain>K12 / MG1655 / ATCC 47076</strain>
    </source>
</reference>
<reference key="4">
    <citation type="journal article" date="1997" name="Science">
        <title>The complete genome sequence of Escherichia coli K-12.</title>
        <authorList>
            <person name="Blattner F.R."/>
            <person name="Plunkett G. III"/>
            <person name="Bloch C.A."/>
            <person name="Perna N.T."/>
            <person name="Burland V."/>
            <person name="Riley M."/>
            <person name="Collado-Vides J."/>
            <person name="Glasner J.D."/>
            <person name="Rode C.K."/>
            <person name="Mayhew G.F."/>
            <person name="Gregor J."/>
            <person name="Davis N.W."/>
            <person name="Kirkpatrick H.A."/>
            <person name="Goeden M.A."/>
            <person name="Rose D.J."/>
            <person name="Mau B."/>
            <person name="Shao Y."/>
        </authorList>
    </citation>
    <scope>NUCLEOTIDE SEQUENCE [LARGE SCALE GENOMIC DNA]</scope>
    <source>
        <strain>K12 / MG1655 / ATCC 47076</strain>
    </source>
</reference>
<reference key="5">
    <citation type="journal article" date="2006" name="Mol. Syst. Biol.">
        <title>Highly accurate genome sequences of Escherichia coli K-12 strains MG1655 and W3110.</title>
        <authorList>
            <person name="Hayashi K."/>
            <person name="Morooka N."/>
            <person name="Yamamoto Y."/>
            <person name="Fujita K."/>
            <person name="Isono K."/>
            <person name="Choi S."/>
            <person name="Ohtsubo E."/>
            <person name="Baba T."/>
            <person name="Wanner B.L."/>
            <person name="Mori H."/>
            <person name="Horiuchi T."/>
        </authorList>
    </citation>
    <scope>NUCLEOTIDE SEQUENCE [LARGE SCALE GENOMIC DNA]</scope>
    <source>
        <strain>K12 / W3110 / ATCC 27325 / DSM 5911</strain>
    </source>
</reference>
<reference key="6">
    <citation type="journal article" date="1984" name="Nucleic Acids Res.">
        <title>Analysis of the Escherichia coli proBA locus by DNA and protein sequencing.</title>
        <authorList>
            <person name="Deutch A.H."/>
            <person name="Rushlow K.E."/>
            <person name="Smith C.J."/>
        </authorList>
    </citation>
    <scope>NUCLEOTIDE SEQUENCE [GENOMIC DNA] OF 1-22</scope>
</reference>
<reference key="7">
    <citation type="journal article" date="1989" name="J. Biol. Chem.">
        <title>Existence and purification of porin heterotrimers of Escherichia coli K12 OmpC, OmpF, and PhoE proteins.</title>
        <authorList>
            <person name="Gehring K.B."/>
            <person name="Nikaido H."/>
        </authorList>
    </citation>
    <scope>SUBUNIT</scope>
    <scope>SUBCELLULAR LOCATION</scope>
    <scope>INDUCTION BY PHOSPHATE STARVATION</scope>
    <source>
        <strain>K12 / JF568</strain>
    </source>
</reference>
<reference key="8">
    <citation type="journal article" date="1991" name="J. Mol. Biol.">
        <title>Carboxy-terminal phenylalanine is essential for the correct assembly of a bacterial outer membrane protein.</title>
        <authorList>
            <person name="Struyve M."/>
            <person name="Moons M."/>
            <person name="Tommassen J."/>
        </authorList>
    </citation>
    <scope>MUTAGENESIS OF PHE-351</scope>
</reference>
<reference key="9">
    <citation type="journal article" date="1997" name="Electrophoresis">
        <title>Escherichia coli proteome analysis using the gene-protein database.</title>
        <authorList>
            <person name="VanBogelen R.A."/>
            <person name="Abshire K.Z."/>
            <person name="Moldover B."/>
            <person name="Olson E.R."/>
            <person name="Neidhardt F.C."/>
        </authorList>
    </citation>
    <scope>IDENTIFICATION BY 2D-GEL</scope>
</reference>
<reference key="10">
    <citation type="journal article" date="1991" name="Nature">
        <title>Structural architecture of an outer membrane channel as determined by electron crystallography.</title>
        <authorList>
            <person name="Jap B.K."/>
            <person name="Walian P.J."/>
            <person name="Gehring K."/>
        </authorList>
    </citation>
    <scope>X-RAY CRYSTALLOGRAPHY (6.0 ANGSTROMS)</scope>
</reference>
<reference key="11">
    <citation type="journal article" date="1992" name="Nature">
        <title>Crystal structures explain functional properties of two E. coli porins.</title>
        <authorList>
            <person name="Cowan S.W."/>
            <person name="Schirmer T."/>
            <person name="Rummel G."/>
            <person name="Steiert M."/>
            <person name="Ghosh R."/>
            <person name="Pauptit R.A."/>
            <person name="Jansonius J.N."/>
            <person name="Rosenbusch J.P."/>
        </authorList>
    </citation>
    <scope>X-RAY CRYSTALLOGRAPHY (3.0 ANGSTROMS)</scope>
</reference>
<reference key="12">
    <citation type="journal article" date="1993" name="Mol. Microbiol.">
        <title>Topology of PhoE porin: the 'eyelet' region.</title>
        <authorList>
            <person name="Struyve M."/>
            <person name="Visser J."/>
            <person name="Adriaanse H."/>
            <person name="Benz R."/>
            <person name="Tommassen J."/>
        </authorList>
    </citation>
    <scope>TOPOLOGY</scope>
</reference>
<dbReference type="EMBL" id="V00316">
    <property type="protein sequence ID" value="CAA23605.1"/>
    <property type="molecule type" value="Genomic_DNA"/>
</dbReference>
<dbReference type="EMBL" id="U70214">
    <property type="protein sequence ID" value="AAB08661.1"/>
    <property type="molecule type" value="Genomic_DNA"/>
</dbReference>
<dbReference type="EMBL" id="U00096">
    <property type="protein sequence ID" value="AAC73345.1"/>
    <property type="molecule type" value="Genomic_DNA"/>
</dbReference>
<dbReference type="EMBL" id="AP009048">
    <property type="protein sequence ID" value="BAA77910.1"/>
    <property type="molecule type" value="Genomic_DNA"/>
</dbReference>
<dbReference type="EMBL" id="X00786">
    <property type="protein sequence ID" value="CAA25362.1"/>
    <property type="molecule type" value="Genomic_DNA"/>
</dbReference>
<dbReference type="PIR" id="A03432">
    <property type="entry name" value="MMECPE"/>
</dbReference>
<dbReference type="RefSeq" id="NP_414776.1">
    <property type="nucleotide sequence ID" value="NC_000913.3"/>
</dbReference>
<dbReference type="RefSeq" id="WP_000749863.1">
    <property type="nucleotide sequence ID" value="NZ_LN832404.1"/>
</dbReference>
<dbReference type="PDB" id="1PHO">
    <property type="method" value="X-ray"/>
    <property type="resolution" value="3.00 A"/>
    <property type="chains" value="A=22-351"/>
</dbReference>
<dbReference type="PDBsum" id="1PHO"/>
<dbReference type="SMR" id="P02932"/>
<dbReference type="BioGRID" id="4259766">
    <property type="interactions" value="264"/>
</dbReference>
<dbReference type="DIP" id="DIP-10498N"/>
<dbReference type="FunCoup" id="P02932">
    <property type="interactions" value="149"/>
</dbReference>
<dbReference type="IntAct" id="P02932">
    <property type="interactions" value="4"/>
</dbReference>
<dbReference type="STRING" id="511145.b0241"/>
<dbReference type="TCDB" id="1.B.1.1.2">
    <property type="family name" value="the general bacterial porin (gbp) family"/>
</dbReference>
<dbReference type="PaxDb" id="511145-b0241"/>
<dbReference type="EnsemblBacteria" id="AAC73345">
    <property type="protein sequence ID" value="AAC73345"/>
    <property type="gene ID" value="b0241"/>
</dbReference>
<dbReference type="GeneID" id="93777152"/>
<dbReference type="GeneID" id="944926"/>
<dbReference type="KEGG" id="ecj:JW0231"/>
<dbReference type="KEGG" id="eco:b0241"/>
<dbReference type="KEGG" id="ecoc:C3026_01145"/>
<dbReference type="KEGG" id="ecoc:C3026_23880"/>
<dbReference type="PATRIC" id="fig|1411691.4.peg.2042"/>
<dbReference type="EchoBASE" id="EB0722"/>
<dbReference type="eggNOG" id="COG3203">
    <property type="taxonomic scope" value="Bacteria"/>
</dbReference>
<dbReference type="HOGENOM" id="CLU_058202_0_0_6"/>
<dbReference type="InParanoid" id="P02932"/>
<dbReference type="OMA" id="KAMHYIS"/>
<dbReference type="OrthoDB" id="7055111at2"/>
<dbReference type="PhylomeDB" id="P02932"/>
<dbReference type="BioCyc" id="EcoCyc:MONOMER0-282"/>
<dbReference type="BioCyc" id="MetaCyc:MONOMER0-282"/>
<dbReference type="EvolutionaryTrace" id="P02932"/>
<dbReference type="PRO" id="PR:P02932"/>
<dbReference type="Proteomes" id="UP000000625">
    <property type="component" value="Chromosome"/>
</dbReference>
<dbReference type="GO" id="GO:0009279">
    <property type="term" value="C:cell outer membrane"/>
    <property type="evidence" value="ECO:0007669"/>
    <property type="project" value="UniProtKB-SubCell"/>
</dbReference>
<dbReference type="GO" id="GO:0046930">
    <property type="term" value="C:pore complex"/>
    <property type="evidence" value="ECO:0000314"/>
    <property type="project" value="CACAO"/>
</dbReference>
<dbReference type="GO" id="GO:0015288">
    <property type="term" value="F:porin activity"/>
    <property type="evidence" value="ECO:0000318"/>
    <property type="project" value="GO_Central"/>
</dbReference>
<dbReference type="GO" id="GO:0034220">
    <property type="term" value="P:monoatomic ion transmembrane transport"/>
    <property type="evidence" value="ECO:0007669"/>
    <property type="project" value="InterPro"/>
</dbReference>
<dbReference type="CDD" id="cd00342">
    <property type="entry name" value="gram_neg_porins"/>
    <property type="match status" value="1"/>
</dbReference>
<dbReference type="FunFam" id="2.40.160.10:FF:000002">
    <property type="entry name" value="Outer membrane porin F"/>
    <property type="match status" value="1"/>
</dbReference>
<dbReference type="Gene3D" id="2.40.160.10">
    <property type="entry name" value="Porin"/>
    <property type="match status" value="1"/>
</dbReference>
<dbReference type="InterPro" id="IPR050298">
    <property type="entry name" value="Gram-neg_bact_OMP"/>
</dbReference>
<dbReference type="InterPro" id="IPR033900">
    <property type="entry name" value="Gram_neg_porin_domain"/>
</dbReference>
<dbReference type="InterPro" id="IPR023614">
    <property type="entry name" value="Porin_dom_sf"/>
</dbReference>
<dbReference type="InterPro" id="IPR001897">
    <property type="entry name" value="Porin_gammaproteobac"/>
</dbReference>
<dbReference type="InterPro" id="IPR001702">
    <property type="entry name" value="Porin_Gram-ve"/>
</dbReference>
<dbReference type="InterPro" id="IPR013793">
    <property type="entry name" value="Porin_Gram-ve_CS"/>
</dbReference>
<dbReference type="NCBIfam" id="NF007544">
    <property type="entry name" value="PRK10159.1"/>
    <property type="match status" value="1"/>
</dbReference>
<dbReference type="PANTHER" id="PTHR34501:SF5">
    <property type="entry name" value="OUTER MEMBRANE PORIN PHOE"/>
    <property type="match status" value="1"/>
</dbReference>
<dbReference type="PANTHER" id="PTHR34501">
    <property type="entry name" value="PROTEIN YDDL-RELATED"/>
    <property type="match status" value="1"/>
</dbReference>
<dbReference type="Pfam" id="PF00267">
    <property type="entry name" value="Porin_1"/>
    <property type="match status" value="1"/>
</dbReference>
<dbReference type="PRINTS" id="PR00183">
    <property type="entry name" value="ECOLIPORIN"/>
</dbReference>
<dbReference type="PRINTS" id="PR00182">
    <property type="entry name" value="ECOLNEIPORIN"/>
</dbReference>
<dbReference type="SUPFAM" id="SSF56935">
    <property type="entry name" value="Porins"/>
    <property type="match status" value="1"/>
</dbReference>
<dbReference type="PROSITE" id="PS00576">
    <property type="entry name" value="GRAM_NEG_PORIN"/>
    <property type="match status" value="1"/>
</dbReference>
<accession>P02932</accession>
<evidence type="ECO:0000269" key="1">
    <source>
    </source>
</evidence>
<evidence type="ECO:0000269" key="2">
    <source>
    </source>
</evidence>
<evidence type="ECO:0000305" key="3"/>
<evidence type="ECO:0007829" key="4">
    <source>
        <dbReference type="PDB" id="1PHO"/>
    </source>
</evidence>